<name>NAPA_LEPCP</name>
<protein>
    <recommendedName>
        <fullName evidence="1">Periplasmic nitrate reductase</fullName>
        <ecNumber evidence="1">1.9.6.1</ecNumber>
    </recommendedName>
</protein>
<evidence type="ECO:0000255" key="1">
    <source>
        <dbReference type="HAMAP-Rule" id="MF_01630"/>
    </source>
</evidence>
<evidence type="ECO:0000256" key="2">
    <source>
        <dbReference type="SAM" id="MobiDB-lite"/>
    </source>
</evidence>
<gene>
    <name evidence="1" type="primary">napA</name>
    <name type="ordered locus">Lcho_1343</name>
</gene>
<comment type="function">
    <text evidence="1">Catalytic subunit of the periplasmic nitrate reductase complex NapAB. Receives electrons from NapB and catalyzes the reduction of nitrate to nitrite.</text>
</comment>
<comment type="catalytic activity">
    <reaction evidence="1">
        <text>2 Fe(II)-[cytochrome] + nitrate + 2 H(+) = 2 Fe(III)-[cytochrome] + nitrite + H2O</text>
        <dbReference type="Rhea" id="RHEA:12909"/>
        <dbReference type="Rhea" id="RHEA-COMP:11777"/>
        <dbReference type="Rhea" id="RHEA-COMP:11778"/>
        <dbReference type="ChEBI" id="CHEBI:15377"/>
        <dbReference type="ChEBI" id="CHEBI:15378"/>
        <dbReference type="ChEBI" id="CHEBI:16301"/>
        <dbReference type="ChEBI" id="CHEBI:17632"/>
        <dbReference type="ChEBI" id="CHEBI:29033"/>
        <dbReference type="ChEBI" id="CHEBI:29034"/>
        <dbReference type="EC" id="1.9.6.1"/>
    </reaction>
</comment>
<comment type="cofactor">
    <cofactor evidence="1">
        <name>[4Fe-4S] cluster</name>
        <dbReference type="ChEBI" id="CHEBI:49883"/>
    </cofactor>
    <text evidence="1">Binds 1 [4Fe-4S] cluster.</text>
</comment>
<comment type="cofactor">
    <cofactor evidence="1">
        <name>Mo-bis(molybdopterin guanine dinucleotide)</name>
        <dbReference type="ChEBI" id="CHEBI:60539"/>
    </cofactor>
    <text evidence="1">Binds 1 molybdenum-bis(molybdopterin guanine dinucleotide) (Mo-bis-MGD) cofactor per subunit.</text>
</comment>
<comment type="subunit">
    <text evidence="1">Component of the periplasmic nitrate reductase NapAB complex composed of NapA and NapB.</text>
</comment>
<comment type="subcellular location">
    <subcellularLocation>
        <location evidence="1">Periplasm</location>
    </subcellularLocation>
</comment>
<comment type="PTM">
    <text evidence="1">Predicted to be exported by the Tat system. The position of the signal peptide cleavage has not been experimentally proven.</text>
</comment>
<comment type="similarity">
    <text evidence="1">Belongs to the prokaryotic molybdopterin-containing oxidoreductase family. NasA/NapA/NarB subfamily.</text>
</comment>
<organism>
    <name type="scientific">Leptothrix cholodnii (strain ATCC 51168 / LMG 8142 / SP-6)</name>
    <name type="common">Leptothrix discophora (strain SP-6)</name>
    <dbReference type="NCBI Taxonomy" id="395495"/>
    <lineage>
        <taxon>Bacteria</taxon>
        <taxon>Pseudomonadati</taxon>
        <taxon>Pseudomonadota</taxon>
        <taxon>Betaproteobacteria</taxon>
        <taxon>Burkholderiales</taxon>
        <taxon>Sphaerotilaceae</taxon>
        <taxon>Leptothrix</taxon>
    </lineage>
</organism>
<reference key="1">
    <citation type="submission" date="2008-03" db="EMBL/GenBank/DDBJ databases">
        <title>Complete sequence of Leptothrix cholodnii SP-6.</title>
        <authorList>
            <consortium name="US DOE Joint Genome Institute"/>
            <person name="Copeland A."/>
            <person name="Lucas S."/>
            <person name="Lapidus A."/>
            <person name="Glavina del Rio T."/>
            <person name="Dalin E."/>
            <person name="Tice H."/>
            <person name="Bruce D."/>
            <person name="Goodwin L."/>
            <person name="Pitluck S."/>
            <person name="Chertkov O."/>
            <person name="Brettin T."/>
            <person name="Detter J.C."/>
            <person name="Han C."/>
            <person name="Kuske C.R."/>
            <person name="Schmutz J."/>
            <person name="Larimer F."/>
            <person name="Land M."/>
            <person name="Hauser L."/>
            <person name="Kyrpides N."/>
            <person name="Lykidis A."/>
            <person name="Emerson D."/>
            <person name="Richardson P."/>
        </authorList>
    </citation>
    <scope>NUCLEOTIDE SEQUENCE [LARGE SCALE GENOMIC DNA]</scope>
    <source>
        <strain>ATCC 51168 / LMG 8142 / SP-6</strain>
    </source>
</reference>
<dbReference type="EC" id="1.9.6.1" evidence="1"/>
<dbReference type="EMBL" id="CP001013">
    <property type="protein sequence ID" value="ACB33611.1"/>
    <property type="molecule type" value="Genomic_DNA"/>
</dbReference>
<dbReference type="RefSeq" id="WP_012346373.1">
    <property type="nucleotide sequence ID" value="NC_010524.1"/>
</dbReference>
<dbReference type="SMR" id="B1Y6A6"/>
<dbReference type="STRING" id="395495.Lcho_1343"/>
<dbReference type="KEGG" id="lch:Lcho_1343"/>
<dbReference type="eggNOG" id="COG0243">
    <property type="taxonomic scope" value="Bacteria"/>
</dbReference>
<dbReference type="HOGENOM" id="CLU_000422_13_4_4"/>
<dbReference type="OrthoDB" id="9810782at2"/>
<dbReference type="Proteomes" id="UP000001693">
    <property type="component" value="Chromosome"/>
</dbReference>
<dbReference type="GO" id="GO:0016020">
    <property type="term" value="C:membrane"/>
    <property type="evidence" value="ECO:0007669"/>
    <property type="project" value="TreeGrafter"/>
</dbReference>
<dbReference type="GO" id="GO:0009325">
    <property type="term" value="C:nitrate reductase complex"/>
    <property type="evidence" value="ECO:0007669"/>
    <property type="project" value="TreeGrafter"/>
</dbReference>
<dbReference type="GO" id="GO:0042597">
    <property type="term" value="C:periplasmic space"/>
    <property type="evidence" value="ECO:0007669"/>
    <property type="project" value="UniProtKB-SubCell"/>
</dbReference>
<dbReference type="GO" id="GO:0051539">
    <property type="term" value="F:4 iron, 4 sulfur cluster binding"/>
    <property type="evidence" value="ECO:0007669"/>
    <property type="project" value="UniProtKB-KW"/>
</dbReference>
<dbReference type="GO" id="GO:0009055">
    <property type="term" value="F:electron transfer activity"/>
    <property type="evidence" value="ECO:0007669"/>
    <property type="project" value="UniProtKB-UniRule"/>
</dbReference>
<dbReference type="GO" id="GO:0005506">
    <property type="term" value="F:iron ion binding"/>
    <property type="evidence" value="ECO:0007669"/>
    <property type="project" value="UniProtKB-UniRule"/>
</dbReference>
<dbReference type="GO" id="GO:0030151">
    <property type="term" value="F:molybdenum ion binding"/>
    <property type="evidence" value="ECO:0007669"/>
    <property type="project" value="InterPro"/>
</dbReference>
<dbReference type="GO" id="GO:0043546">
    <property type="term" value="F:molybdopterin cofactor binding"/>
    <property type="evidence" value="ECO:0007669"/>
    <property type="project" value="InterPro"/>
</dbReference>
<dbReference type="GO" id="GO:0050140">
    <property type="term" value="F:nitrate reductase (cytochrome) activity"/>
    <property type="evidence" value="ECO:0007669"/>
    <property type="project" value="UniProtKB-EC"/>
</dbReference>
<dbReference type="GO" id="GO:0045333">
    <property type="term" value="P:cellular respiration"/>
    <property type="evidence" value="ECO:0007669"/>
    <property type="project" value="UniProtKB-ARBA"/>
</dbReference>
<dbReference type="GO" id="GO:0006777">
    <property type="term" value="P:Mo-molybdopterin cofactor biosynthetic process"/>
    <property type="evidence" value="ECO:0007669"/>
    <property type="project" value="UniProtKB-UniRule"/>
</dbReference>
<dbReference type="GO" id="GO:0042128">
    <property type="term" value="P:nitrate assimilation"/>
    <property type="evidence" value="ECO:0007669"/>
    <property type="project" value="UniProtKB-UniRule"/>
</dbReference>
<dbReference type="CDD" id="cd02791">
    <property type="entry name" value="MopB_CT_Nitrate-R-NapA-like"/>
    <property type="match status" value="1"/>
</dbReference>
<dbReference type="CDD" id="cd02754">
    <property type="entry name" value="MopB_Nitrate-R-NapA-like"/>
    <property type="match status" value="1"/>
</dbReference>
<dbReference type="FunFam" id="2.40.40.20:FF:000005">
    <property type="entry name" value="Periplasmic nitrate reductase"/>
    <property type="match status" value="1"/>
</dbReference>
<dbReference type="Gene3D" id="2.40.40.20">
    <property type="match status" value="1"/>
</dbReference>
<dbReference type="Gene3D" id="3.30.200.210">
    <property type="match status" value="1"/>
</dbReference>
<dbReference type="Gene3D" id="3.40.50.740">
    <property type="match status" value="1"/>
</dbReference>
<dbReference type="Gene3D" id="3.40.228.10">
    <property type="entry name" value="Dimethylsulfoxide Reductase, domain 2"/>
    <property type="match status" value="1"/>
</dbReference>
<dbReference type="HAMAP" id="MF_01630">
    <property type="entry name" value="Nitrate_reduct_NapA"/>
    <property type="match status" value="1"/>
</dbReference>
<dbReference type="InterPro" id="IPR009010">
    <property type="entry name" value="Asp_de-COase-like_dom_sf"/>
</dbReference>
<dbReference type="InterPro" id="IPR041957">
    <property type="entry name" value="CT_Nitrate-R-NapA-like"/>
</dbReference>
<dbReference type="InterPro" id="IPR006657">
    <property type="entry name" value="MoPterin_dinucl-bd_dom"/>
</dbReference>
<dbReference type="InterPro" id="IPR006656">
    <property type="entry name" value="Mopterin_OxRdtase"/>
</dbReference>
<dbReference type="InterPro" id="IPR006963">
    <property type="entry name" value="Mopterin_OxRdtase_4Fe-4S_dom"/>
</dbReference>
<dbReference type="InterPro" id="IPR027467">
    <property type="entry name" value="MopterinOxRdtase_cofactor_BS"/>
</dbReference>
<dbReference type="InterPro" id="IPR010051">
    <property type="entry name" value="Periplasm_NO3_reductase_lsu"/>
</dbReference>
<dbReference type="InterPro" id="IPR050123">
    <property type="entry name" value="Prok_molybdopt-oxidoreductase"/>
</dbReference>
<dbReference type="InterPro" id="IPR006311">
    <property type="entry name" value="TAT_signal"/>
</dbReference>
<dbReference type="InterPro" id="IPR019546">
    <property type="entry name" value="TAT_signal_bac_arc"/>
</dbReference>
<dbReference type="NCBIfam" id="TIGR01706">
    <property type="entry name" value="NAPA"/>
    <property type="match status" value="1"/>
</dbReference>
<dbReference type="NCBIfam" id="NF010055">
    <property type="entry name" value="PRK13532.1"/>
    <property type="match status" value="1"/>
</dbReference>
<dbReference type="NCBIfam" id="TIGR01409">
    <property type="entry name" value="TAT_signal_seq"/>
    <property type="match status" value="1"/>
</dbReference>
<dbReference type="PANTHER" id="PTHR43105:SF11">
    <property type="entry name" value="PERIPLASMIC NITRATE REDUCTASE"/>
    <property type="match status" value="1"/>
</dbReference>
<dbReference type="PANTHER" id="PTHR43105">
    <property type="entry name" value="RESPIRATORY NITRATE REDUCTASE"/>
    <property type="match status" value="1"/>
</dbReference>
<dbReference type="Pfam" id="PF04879">
    <property type="entry name" value="Molybdop_Fe4S4"/>
    <property type="match status" value="1"/>
</dbReference>
<dbReference type="Pfam" id="PF00384">
    <property type="entry name" value="Molybdopterin"/>
    <property type="match status" value="1"/>
</dbReference>
<dbReference type="Pfam" id="PF01568">
    <property type="entry name" value="Molydop_binding"/>
    <property type="match status" value="1"/>
</dbReference>
<dbReference type="SMART" id="SM00926">
    <property type="entry name" value="Molybdop_Fe4S4"/>
    <property type="match status" value="1"/>
</dbReference>
<dbReference type="SUPFAM" id="SSF50692">
    <property type="entry name" value="ADC-like"/>
    <property type="match status" value="1"/>
</dbReference>
<dbReference type="SUPFAM" id="SSF53706">
    <property type="entry name" value="Formate dehydrogenase/DMSO reductase, domains 1-3"/>
    <property type="match status" value="1"/>
</dbReference>
<dbReference type="PROSITE" id="PS51669">
    <property type="entry name" value="4FE4S_MOW_BIS_MGD"/>
    <property type="match status" value="1"/>
</dbReference>
<dbReference type="PROSITE" id="PS00551">
    <property type="entry name" value="MOLYBDOPTERIN_PROK_1"/>
    <property type="match status" value="1"/>
</dbReference>
<dbReference type="PROSITE" id="PS51318">
    <property type="entry name" value="TAT"/>
    <property type="match status" value="1"/>
</dbReference>
<sequence>MQSNRRDFLKAQALAASAAAAGIPIVVEAANGTAAPKTAADVAVRWDKAPCRFCGTGCAVMVGVQEGKVVATQGDPEAPVNRGLNCIKGYFLSKIMYGRDRLQTPLLRKKNGVYDKEGDFVPVSWDEAFDIMAAKWKETLKTDGPTGIGMFGSGQWTVWEGYAAAKLWKAGFRSNNLDPNARHCMASAVTGFMRTFGIDEPMGCYDDIEQSDAFVLWGSNMAEMHPILWSRITDRRLSNPHVKVAVLSTYEHRSFDLADQAMIFKPQTDLAILNYIANYIITNKKVNTEFVKKNINFKKGATDIGYGLRPGHALEKDATSNGYPGADGKPKGNPNDSTPISFDEYAKFVSEYTAEKVSEISGVTVEQLKALAELYADPKVKVVSYWTMGFNQHTRGTWANNMVYNIHLLTGKISQPGNGPFSLTGQPSACGTAREVGTFAHRLPADMVVTNPEHRHHAEEIWGLPEGTIPDKIGLHAVAQSRALKDGKLKCYWVTTNNNMQAGPNINGEILPGWRNPKTFIVVSDPYPTASAMAADLVLPAAMWVEKEGAFGNAERRTQVWRQQVSAPGEARSDLWQMMEFSKRFKIEDVWTAELIAKKPAVKGKTLFDVLFRNGKVDKYPLADLTKVNAKYIKDYTNDESKAYGFYVQKGLFEEYAEFGRGHGHDLAPFDVYHEVRGLRWPVVDGKETLWRFREGYDPYVKKGEGVKFYGHKDGRANIFALPYQPAAESPDKEYDLWLCTGRVLEHWHTGTMTRRVPELHRAVPEAQLFMHPDDAKARGLQRGMKVKIASRRGEILLAVETKGRNKVPRGLVFVPFFDEGKLINKLTLDATCPISKETDFKKCAVKVVRA</sequence>
<keyword id="KW-0004">4Fe-4S</keyword>
<keyword id="KW-0249">Electron transport</keyword>
<keyword id="KW-0408">Iron</keyword>
<keyword id="KW-0411">Iron-sulfur</keyword>
<keyword id="KW-0479">Metal-binding</keyword>
<keyword id="KW-0500">Molybdenum</keyword>
<keyword id="KW-0534">Nitrate assimilation</keyword>
<keyword id="KW-0560">Oxidoreductase</keyword>
<keyword id="KW-0574">Periplasm</keyword>
<keyword id="KW-1185">Reference proteome</keyword>
<keyword id="KW-0732">Signal</keyword>
<keyword id="KW-0813">Transport</keyword>
<accession>B1Y6A6</accession>
<proteinExistence type="inferred from homology"/>
<feature type="signal peptide" description="Tat-type signal" evidence="1">
    <location>
        <begin position="1"/>
        <end position="29"/>
    </location>
</feature>
<feature type="chain" id="PRO_5000331867" description="Periplasmic nitrate reductase" evidence="1">
    <location>
        <begin position="30"/>
        <end position="851"/>
    </location>
</feature>
<feature type="domain" description="4Fe-4S Mo/W bis-MGD-type" evidence="1">
    <location>
        <begin position="44"/>
        <end position="100"/>
    </location>
</feature>
<feature type="region of interest" description="Disordered" evidence="2">
    <location>
        <begin position="317"/>
        <end position="338"/>
    </location>
</feature>
<feature type="binding site" evidence="1">
    <location>
        <position position="51"/>
    </location>
    <ligand>
        <name>[4Fe-4S] cluster</name>
        <dbReference type="ChEBI" id="CHEBI:49883"/>
    </ligand>
</feature>
<feature type="binding site" evidence="1">
    <location>
        <position position="54"/>
    </location>
    <ligand>
        <name>[4Fe-4S] cluster</name>
        <dbReference type="ChEBI" id="CHEBI:49883"/>
    </ligand>
</feature>
<feature type="binding site" evidence="1">
    <location>
        <position position="58"/>
    </location>
    <ligand>
        <name>[4Fe-4S] cluster</name>
        <dbReference type="ChEBI" id="CHEBI:49883"/>
    </ligand>
</feature>
<feature type="binding site" evidence="1">
    <location>
        <position position="86"/>
    </location>
    <ligand>
        <name>[4Fe-4S] cluster</name>
        <dbReference type="ChEBI" id="CHEBI:49883"/>
    </ligand>
</feature>
<feature type="binding site" evidence="1">
    <location>
        <position position="88"/>
    </location>
    <ligand>
        <name>Mo-bis(molybdopterin guanine dinucleotide)</name>
        <dbReference type="ChEBI" id="CHEBI:60539"/>
    </ligand>
</feature>
<feature type="binding site" evidence="1">
    <location>
        <position position="155"/>
    </location>
    <ligand>
        <name>Mo-bis(molybdopterin guanine dinucleotide)</name>
        <dbReference type="ChEBI" id="CHEBI:60539"/>
    </ligand>
</feature>
<feature type="binding site" evidence="1">
    <location>
        <position position="180"/>
    </location>
    <ligand>
        <name>Mo-bis(molybdopterin guanine dinucleotide)</name>
        <dbReference type="ChEBI" id="CHEBI:60539"/>
    </ligand>
</feature>
<feature type="binding site" evidence="1">
    <location>
        <position position="184"/>
    </location>
    <ligand>
        <name>Mo-bis(molybdopterin guanine dinucleotide)</name>
        <dbReference type="ChEBI" id="CHEBI:60539"/>
    </ligand>
</feature>
<feature type="binding site" evidence="1">
    <location>
        <begin position="217"/>
        <end position="224"/>
    </location>
    <ligand>
        <name>Mo-bis(molybdopterin guanine dinucleotide)</name>
        <dbReference type="ChEBI" id="CHEBI:60539"/>
    </ligand>
</feature>
<feature type="binding site" evidence="1">
    <location>
        <begin position="248"/>
        <end position="252"/>
    </location>
    <ligand>
        <name>Mo-bis(molybdopterin guanine dinucleotide)</name>
        <dbReference type="ChEBI" id="CHEBI:60539"/>
    </ligand>
</feature>
<feature type="binding site" evidence="1">
    <location>
        <begin position="267"/>
        <end position="269"/>
    </location>
    <ligand>
        <name>Mo-bis(molybdopterin guanine dinucleotide)</name>
        <dbReference type="ChEBI" id="CHEBI:60539"/>
    </ligand>
</feature>
<feature type="binding site" evidence="1">
    <location>
        <position position="388"/>
    </location>
    <ligand>
        <name>Mo-bis(molybdopterin guanine dinucleotide)</name>
        <dbReference type="ChEBI" id="CHEBI:60539"/>
    </ligand>
</feature>
<feature type="binding site" evidence="1">
    <location>
        <position position="392"/>
    </location>
    <ligand>
        <name>Mo-bis(molybdopterin guanine dinucleotide)</name>
        <dbReference type="ChEBI" id="CHEBI:60539"/>
    </ligand>
</feature>
<feature type="binding site" evidence="1">
    <location>
        <position position="498"/>
    </location>
    <ligand>
        <name>Mo-bis(molybdopterin guanine dinucleotide)</name>
        <dbReference type="ChEBI" id="CHEBI:60539"/>
    </ligand>
</feature>
<feature type="binding site" evidence="1">
    <location>
        <begin position="524"/>
        <end position="525"/>
    </location>
    <ligand>
        <name>Mo-bis(molybdopterin guanine dinucleotide)</name>
        <dbReference type="ChEBI" id="CHEBI:60539"/>
    </ligand>
</feature>
<feature type="binding site" evidence="1">
    <location>
        <position position="547"/>
    </location>
    <ligand>
        <name>Mo-bis(molybdopterin guanine dinucleotide)</name>
        <dbReference type="ChEBI" id="CHEBI:60539"/>
    </ligand>
</feature>
<feature type="binding site" evidence="1">
    <location>
        <position position="574"/>
    </location>
    <ligand>
        <name>Mo-bis(molybdopterin guanine dinucleotide)</name>
        <dbReference type="ChEBI" id="CHEBI:60539"/>
    </ligand>
</feature>
<feature type="binding site" evidence="1">
    <location>
        <begin position="741"/>
        <end position="750"/>
    </location>
    <ligand>
        <name>Mo-bis(molybdopterin guanine dinucleotide)</name>
        <dbReference type="ChEBI" id="CHEBI:60539"/>
    </ligand>
</feature>
<feature type="binding site" evidence="1">
    <location>
        <position position="817"/>
    </location>
    <ligand>
        <name>substrate</name>
    </ligand>
</feature>
<feature type="binding site" evidence="1">
    <location>
        <position position="825"/>
    </location>
    <ligand>
        <name>Mo-bis(molybdopterin guanine dinucleotide)</name>
        <dbReference type="ChEBI" id="CHEBI:60539"/>
    </ligand>
</feature>
<feature type="binding site" evidence="1">
    <location>
        <position position="842"/>
    </location>
    <ligand>
        <name>Mo-bis(molybdopterin guanine dinucleotide)</name>
        <dbReference type="ChEBI" id="CHEBI:60539"/>
    </ligand>
</feature>